<comment type="function">
    <text evidence="1">NAD-binding protein involved in the addition of a carboxymethylaminomethyl (cmnm) group at the wobble position (U34) of certain tRNAs, forming tRNA-cmnm(5)s(2)U34.</text>
</comment>
<comment type="cofactor">
    <cofactor evidence="1">
        <name>FAD</name>
        <dbReference type="ChEBI" id="CHEBI:57692"/>
    </cofactor>
</comment>
<comment type="subunit">
    <text evidence="1">Homodimer. Heterotetramer of two MnmE and two MnmG subunits.</text>
</comment>
<comment type="subcellular location">
    <subcellularLocation>
        <location evidence="1">Cytoplasm</location>
    </subcellularLocation>
</comment>
<comment type="similarity">
    <text evidence="1">Belongs to the MnmG family.</text>
</comment>
<comment type="sequence caution" evidence="3">
    <conflict type="erroneous initiation">
        <sequence resource="EMBL-CDS" id="CAD76162"/>
    </conflict>
</comment>
<evidence type="ECO:0000255" key="1">
    <source>
        <dbReference type="HAMAP-Rule" id="MF_00129"/>
    </source>
</evidence>
<evidence type="ECO:0000256" key="2">
    <source>
        <dbReference type="SAM" id="MobiDB-lite"/>
    </source>
</evidence>
<evidence type="ECO:0000305" key="3"/>
<accession>Q7ULV7</accession>
<feature type="chain" id="PRO_0000117162" description="tRNA uridine 5-carboxymethylaminomethyl modification enzyme MnmG">
    <location>
        <begin position="1"/>
        <end position="653"/>
    </location>
</feature>
<feature type="region of interest" description="Disordered" evidence="2">
    <location>
        <begin position="624"/>
        <end position="653"/>
    </location>
</feature>
<feature type="compositionally biased region" description="Basic and acidic residues" evidence="2">
    <location>
        <begin position="632"/>
        <end position="642"/>
    </location>
</feature>
<feature type="compositionally biased region" description="Polar residues" evidence="2">
    <location>
        <begin position="643"/>
        <end position="653"/>
    </location>
</feature>
<feature type="binding site" evidence="1">
    <location>
        <begin position="18"/>
        <end position="23"/>
    </location>
    <ligand>
        <name>FAD</name>
        <dbReference type="ChEBI" id="CHEBI:57692"/>
    </ligand>
</feature>
<feature type="binding site" evidence="1">
    <location>
        <position position="130"/>
    </location>
    <ligand>
        <name>FAD</name>
        <dbReference type="ChEBI" id="CHEBI:57692"/>
    </ligand>
</feature>
<feature type="binding site" evidence="1">
    <location>
        <position position="195"/>
    </location>
    <ligand>
        <name>FAD</name>
        <dbReference type="ChEBI" id="CHEBI:57692"/>
    </ligand>
</feature>
<feature type="binding site" evidence="1">
    <location>
        <begin position="287"/>
        <end position="301"/>
    </location>
    <ligand>
        <name>NAD(+)</name>
        <dbReference type="ChEBI" id="CHEBI:57540"/>
    </ligand>
</feature>
<feature type="binding site" evidence="1">
    <location>
        <position position="384"/>
    </location>
    <ligand>
        <name>FAD</name>
        <dbReference type="ChEBI" id="CHEBI:57692"/>
    </ligand>
</feature>
<reference key="1">
    <citation type="journal article" date="2003" name="Proc. Natl. Acad. Sci. U.S.A.">
        <title>Complete genome sequence of the marine planctomycete Pirellula sp. strain 1.</title>
        <authorList>
            <person name="Gloeckner F.O."/>
            <person name="Kube M."/>
            <person name="Bauer M."/>
            <person name="Teeling H."/>
            <person name="Lombardot T."/>
            <person name="Ludwig W."/>
            <person name="Gade D."/>
            <person name="Beck A."/>
            <person name="Borzym K."/>
            <person name="Heitmann K."/>
            <person name="Rabus R."/>
            <person name="Schlesner H."/>
            <person name="Amann R."/>
            <person name="Reinhardt R."/>
        </authorList>
    </citation>
    <scope>NUCLEOTIDE SEQUENCE [LARGE SCALE GENOMIC DNA]</scope>
    <source>
        <strain>DSM 10527 / NCIMB 13988 / SH1</strain>
    </source>
</reference>
<keyword id="KW-0963">Cytoplasm</keyword>
<keyword id="KW-0274">FAD</keyword>
<keyword id="KW-0285">Flavoprotein</keyword>
<keyword id="KW-0520">NAD</keyword>
<keyword id="KW-1185">Reference proteome</keyword>
<keyword id="KW-0819">tRNA processing</keyword>
<gene>
    <name evidence="1" type="primary">mnmG</name>
    <name evidence="1" type="synonym">gidA</name>
    <name type="ordered locus">RB9255</name>
</gene>
<name>MNMG_RHOBA</name>
<dbReference type="EMBL" id="BX294149">
    <property type="protein sequence ID" value="CAD76162.1"/>
    <property type="status" value="ALT_INIT"/>
    <property type="molecule type" value="Genomic_DNA"/>
</dbReference>
<dbReference type="RefSeq" id="NP_868785.1">
    <property type="nucleotide sequence ID" value="NC_005027.1"/>
</dbReference>
<dbReference type="RefSeq" id="WP_011122216.1">
    <property type="nucleotide sequence ID" value="NC_005027.1"/>
</dbReference>
<dbReference type="SMR" id="Q7ULV7"/>
<dbReference type="FunCoup" id="Q7ULV7">
    <property type="interactions" value="552"/>
</dbReference>
<dbReference type="STRING" id="243090.RB9255"/>
<dbReference type="EnsemblBacteria" id="CAD76162">
    <property type="protein sequence ID" value="CAD76162"/>
    <property type="gene ID" value="RB9255"/>
</dbReference>
<dbReference type="KEGG" id="rba:RB9255"/>
<dbReference type="PATRIC" id="fig|243090.15.peg.4432"/>
<dbReference type="eggNOG" id="COG0445">
    <property type="taxonomic scope" value="Bacteria"/>
</dbReference>
<dbReference type="HOGENOM" id="CLU_007831_2_2_0"/>
<dbReference type="InParanoid" id="Q7ULV7"/>
<dbReference type="OrthoDB" id="9815560at2"/>
<dbReference type="Proteomes" id="UP000001025">
    <property type="component" value="Chromosome"/>
</dbReference>
<dbReference type="GO" id="GO:0005829">
    <property type="term" value="C:cytosol"/>
    <property type="evidence" value="ECO:0000318"/>
    <property type="project" value="GO_Central"/>
</dbReference>
<dbReference type="GO" id="GO:0050660">
    <property type="term" value="F:flavin adenine dinucleotide binding"/>
    <property type="evidence" value="ECO:0000318"/>
    <property type="project" value="GO_Central"/>
</dbReference>
<dbReference type="GO" id="GO:0030488">
    <property type="term" value="P:tRNA methylation"/>
    <property type="evidence" value="ECO:0000318"/>
    <property type="project" value="GO_Central"/>
</dbReference>
<dbReference type="GO" id="GO:0002098">
    <property type="term" value="P:tRNA wobble uridine modification"/>
    <property type="evidence" value="ECO:0000318"/>
    <property type="project" value="GO_Central"/>
</dbReference>
<dbReference type="FunFam" id="1.10.10.1800:FF:000003">
    <property type="entry name" value="tRNA uridine 5-carboxymethylaminomethyl modification enzyme MnmG"/>
    <property type="match status" value="1"/>
</dbReference>
<dbReference type="FunFam" id="1.10.150.570:FF:000001">
    <property type="entry name" value="tRNA uridine 5-carboxymethylaminomethyl modification enzyme MnmG"/>
    <property type="match status" value="1"/>
</dbReference>
<dbReference type="FunFam" id="3.50.50.60:FF:000002">
    <property type="entry name" value="tRNA uridine 5-carboxymethylaminomethyl modification enzyme MnmG"/>
    <property type="match status" value="1"/>
</dbReference>
<dbReference type="FunFam" id="3.50.50.60:FF:000010">
    <property type="entry name" value="tRNA uridine 5-carboxymethylaminomethyl modification enzyme MnmG"/>
    <property type="match status" value="1"/>
</dbReference>
<dbReference type="Gene3D" id="3.50.50.60">
    <property type="entry name" value="FAD/NAD(P)-binding domain"/>
    <property type="match status" value="2"/>
</dbReference>
<dbReference type="Gene3D" id="1.10.150.570">
    <property type="entry name" value="GidA associated domain, C-terminal subdomain"/>
    <property type="match status" value="1"/>
</dbReference>
<dbReference type="Gene3D" id="1.10.10.1800">
    <property type="entry name" value="tRNA uridine 5-carboxymethylaminomethyl modification enzyme MnmG/GidA"/>
    <property type="match status" value="1"/>
</dbReference>
<dbReference type="HAMAP" id="MF_00129">
    <property type="entry name" value="MnmG_GidA"/>
    <property type="match status" value="1"/>
</dbReference>
<dbReference type="InterPro" id="IPR036188">
    <property type="entry name" value="FAD/NAD-bd_sf"/>
</dbReference>
<dbReference type="InterPro" id="IPR049312">
    <property type="entry name" value="GIDA_C_N"/>
</dbReference>
<dbReference type="InterPro" id="IPR004416">
    <property type="entry name" value="MnmG"/>
</dbReference>
<dbReference type="InterPro" id="IPR002218">
    <property type="entry name" value="MnmG-rel"/>
</dbReference>
<dbReference type="InterPro" id="IPR020595">
    <property type="entry name" value="MnmG-rel_CS"/>
</dbReference>
<dbReference type="InterPro" id="IPR026904">
    <property type="entry name" value="MnmG_C"/>
</dbReference>
<dbReference type="InterPro" id="IPR047001">
    <property type="entry name" value="MnmG_C_subdom"/>
</dbReference>
<dbReference type="InterPro" id="IPR044920">
    <property type="entry name" value="MnmG_C_subdom_sf"/>
</dbReference>
<dbReference type="InterPro" id="IPR040131">
    <property type="entry name" value="MnmG_N"/>
</dbReference>
<dbReference type="NCBIfam" id="TIGR00136">
    <property type="entry name" value="mnmG_gidA"/>
    <property type="match status" value="1"/>
</dbReference>
<dbReference type="PANTHER" id="PTHR11806">
    <property type="entry name" value="GLUCOSE INHIBITED DIVISION PROTEIN A"/>
    <property type="match status" value="1"/>
</dbReference>
<dbReference type="PANTHER" id="PTHR11806:SF0">
    <property type="entry name" value="PROTEIN MTO1 HOMOLOG, MITOCHONDRIAL"/>
    <property type="match status" value="1"/>
</dbReference>
<dbReference type="Pfam" id="PF01134">
    <property type="entry name" value="GIDA"/>
    <property type="match status" value="1"/>
</dbReference>
<dbReference type="Pfam" id="PF21680">
    <property type="entry name" value="GIDA_C_1st"/>
    <property type="match status" value="1"/>
</dbReference>
<dbReference type="Pfam" id="PF13932">
    <property type="entry name" value="SAM_GIDA_C"/>
    <property type="match status" value="1"/>
</dbReference>
<dbReference type="PRINTS" id="PR00411">
    <property type="entry name" value="PNDRDTASEI"/>
</dbReference>
<dbReference type="SMART" id="SM01228">
    <property type="entry name" value="GIDA_assoc_3"/>
    <property type="match status" value="1"/>
</dbReference>
<dbReference type="SUPFAM" id="SSF51905">
    <property type="entry name" value="FAD/NAD(P)-binding domain"/>
    <property type="match status" value="1"/>
</dbReference>
<dbReference type="PROSITE" id="PS01280">
    <property type="entry name" value="GIDA_1"/>
    <property type="match status" value="1"/>
</dbReference>
<dbReference type="PROSITE" id="PS01281">
    <property type="entry name" value="GIDA_2"/>
    <property type="match status" value="1"/>
</dbReference>
<proteinExistence type="inferred from homology"/>
<sequence>MTANNPQNRYDYDVVVIGAGHAGTEAAAAAARLGAKTALLTTNLDTVGQMSCNPAIGGVAKGQIVREVDALGGLMGEAIDATGIQFRMLNRRKGPAMHSPRAQADKKAYQNFIKYRIETQDNLDLRQETVEDLITEPIADGQDRLANQRVIGVRVRGDAVYHAPTVILTTGTFLQAIMHTGKSQSAGGRAGEGTTAGLSGALKGMGFTLDRFKTGTPPRLNARTIDYSGLEEQPGDDDPQPFSYLNDAISSPQMACHIAHTNERVHDLIRANLDRAPMYSGQIDSRGPRYCPSIEDKVVRFADKSSHQLFLEPEGRQTCEVYVNGISTSLPRDVQDAMFRCIPGLEKAAIMRYGYAVEYDYCPPTQLWPHLESKSVSGLFFAGQINGTTGYEEAAGQGLIAGLNAARTAASKTPWVPSRQDAYIGVLVDDLVTSGTDEPYRMFTSRAEYRLLLRQDNADRRLTAQADELGLIDAARRERFHRKLAEIERGTELLQQAKFQPETGPTVRGDVYLRRPEVTWNVIAEQVPELAGIGREAAEQCSIDIKYAGYIDRQQAEVHKQSRHAEKSIPVSFDYDKIGPLRNEAKEKLTKVRPLNLGQAKRISGITPADLALVLAHLENNSLSQTKSSASVDKRASSDNESSRPTSSASDSL</sequence>
<organism>
    <name type="scientific">Rhodopirellula baltica (strain DSM 10527 / NCIMB 13988 / SH1)</name>
    <dbReference type="NCBI Taxonomy" id="243090"/>
    <lineage>
        <taxon>Bacteria</taxon>
        <taxon>Pseudomonadati</taxon>
        <taxon>Planctomycetota</taxon>
        <taxon>Planctomycetia</taxon>
        <taxon>Pirellulales</taxon>
        <taxon>Pirellulaceae</taxon>
        <taxon>Rhodopirellula</taxon>
    </lineage>
</organism>
<protein>
    <recommendedName>
        <fullName evidence="1">tRNA uridine 5-carboxymethylaminomethyl modification enzyme MnmG</fullName>
    </recommendedName>
    <alternativeName>
        <fullName evidence="1">Glucose-inhibited division protein A</fullName>
    </alternativeName>
</protein>